<gene>
    <name evidence="7" type="primary">SIKE1</name>
    <name type="synonym">SIKE</name>
</gene>
<accession>Q9BRV8</accession>
<accession>Q5TEZ7</accession>
<accession>Q5TEZ9</accession>
<accession>Q68DZ4</accession>
<accession>Q9H778</accession>
<name>SIKE1_HUMAN</name>
<proteinExistence type="evidence at protein level"/>
<reference key="1">
    <citation type="journal article" date="2004" name="Nat. Genet.">
        <title>Complete sequencing and characterization of 21,243 full-length human cDNAs.</title>
        <authorList>
            <person name="Ota T."/>
            <person name="Suzuki Y."/>
            <person name="Nishikawa T."/>
            <person name="Otsuki T."/>
            <person name="Sugiyama T."/>
            <person name="Irie R."/>
            <person name="Wakamatsu A."/>
            <person name="Hayashi K."/>
            <person name="Sato H."/>
            <person name="Nagai K."/>
            <person name="Kimura K."/>
            <person name="Makita H."/>
            <person name="Sekine M."/>
            <person name="Obayashi M."/>
            <person name="Nishi T."/>
            <person name="Shibahara T."/>
            <person name="Tanaka T."/>
            <person name="Ishii S."/>
            <person name="Yamamoto J."/>
            <person name="Saito K."/>
            <person name="Kawai Y."/>
            <person name="Isono Y."/>
            <person name="Nakamura Y."/>
            <person name="Nagahari K."/>
            <person name="Murakami K."/>
            <person name="Yasuda T."/>
            <person name="Iwayanagi T."/>
            <person name="Wagatsuma M."/>
            <person name="Shiratori A."/>
            <person name="Sudo H."/>
            <person name="Hosoiri T."/>
            <person name="Kaku Y."/>
            <person name="Kodaira H."/>
            <person name="Kondo H."/>
            <person name="Sugawara M."/>
            <person name="Takahashi M."/>
            <person name="Kanda K."/>
            <person name="Yokoi T."/>
            <person name="Furuya T."/>
            <person name="Kikkawa E."/>
            <person name="Omura Y."/>
            <person name="Abe K."/>
            <person name="Kamihara K."/>
            <person name="Katsuta N."/>
            <person name="Sato K."/>
            <person name="Tanikawa M."/>
            <person name="Yamazaki M."/>
            <person name="Ninomiya K."/>
            <person name="Ishibashi T."/>
            <person name="Yamashita H."/>
            <person name="Murakawa K."/>
            <person name="Fujimori K."/>
            <person name="Tanai H."/>
            <person name="Kimata M."/>
            <person name="Watanabe M."/>
            <person name="Hiraoka S."/>
            <person name="Chiba Y."/>
            <person name="Ishida S."/>
            <person name="Ono Y."/>
            <person name="Takiguchi S."/>
            <person name="Watanabe S."/>
            <person name="Yosida M."/>
            <person name="Hotuta T."/>
            <person name="Kusano J."/>
            <person name="Kanehori K."/>
            <person name="Takahashi-Fujii A."/>
            <person name="Hara H."/>
            <person name="Tanase T.-O."/>
            <person name="Nomura Y."/>
            <person name="Togiya S."/>
            <person name="Komai F."/>
            <person name="Hara R."/>
            <person name="Takeuchi K."/>
            <person name="Arita M."/>
            <person name="Imose N."/>
            <person name="Musashino K."/>
            <person name="Yuuki H."/>
            <person name="Oshima A."/>
            <person name="Sasaki N."/>
            <person name="Aotsuka S."/>
            <person name="Yoshikawa Y."/>
            <person name="Matsunawa H."/>
            <person name="Ichihara T."/>
            <person name="Shiohata N."/>
            <person name="Sano S."/>
            <person name="Moriya S."/>
            <person name="Momiyama H."/>
            <person name="Satoh N."/>
            <person name="Takami S."/>
            <person name="Terashima Y."/>
            <person name="Suzuki O."/>
            <person name="Nakagawa S."/>
            <person name="Senoh A."/>
            <person name="Mizoguchi H."/>
            <person name="Goto Y."/>
            <person name="Shimizu F."/>
            <person name="Wakebe H."/>
            <person name="Hishigaki H."/>
            <person name="Watanabe T."/>
            <person name="Sugiyama A."/>
            <person name="Takemoto M."/>
            <person name="Kawakami B."/>
            <person name="Yamazaki M."/>
            <person name="Watanabe K."/>
            <person name="Kumagai A."/>
            <person name="Itakura S."/>
            <person name="Fukuzumi Y."/>
            <person name="Fujimori Y."/>
            <person name="Komiyama M."/>
            <person name="Tashiro H."/>
            <person name="Tanigami A."/>
            <person name="Fujiwara T."/>
            <person name="Ono T."/>
            <person name="Yamada K."/>
            <person name="Fujii Y."/>
            <person name="Ozaki K."/>
            <person name="Hirao M."/>
            <person name="Ohmori Y."/>
            <person name="Kawabata A."/>
            <person name="Hikiji T."/>
            <person name="Kobatake N."/>
            <person name="Inagaki H."/>
            <person name="Ikema Y."/>
            <person name="Okamoto S."/>
            <person name="Okitani R."/>
            <person name="Kawakami T."/>
            <person name="Noguchi S."/>
            <person name="Itoh T."/>
            <person name="Shigeta K."/>
            <person name="Senba T."/>
            <person name="Matsumura K."/>
            <person name="Nakajima Y."/>
            <person name="Mizuno T."/>
            <person name="Morinaga M."/>
            <person name="Sasaki M."/>
            <person name="Togashi T."/>
            <person name="Oyama M."/>
            <person name="Hata H."/>
            <person name="Watanabe M."/>
            <person name="Komatsu T."/>
            <person name="Mizushima-Sugano J."/>
            <person name="Satoh T."/>
            <person name="Shirai Y."/>
            <person name="Takahashi Y."/>
            <person name="Nakagawa K."/>
            <person name="Okumura K."/>
            <person name="Nagase T."/>
            <person name="Nomura N."/>
            <person name="Kikuchi H."/>
            <person name="Masuho Y."/>
            <person name="Yamashita R."/>
            <person name="Nakai K."/>
            <person name="Yada T."/>
            <person name="Nakamura Y."/>
            <person name="Ohara O."/>
            <person name="Isogai T."/>
            <person name="Sugano S."/>
        </authorList>
    </citation>
    <scope>NUCLEOTIDE SEQUENCE [LARGE SCALE MRNA] (ISOFORM 1)</scope>
    <source>
        <tissue>Smooth muscle</tissue>
    </source>
</reference>
<reference key="2">
    <citation type="journal article" date="2007" name="BMC Genomics">
        <title>The full-ORF clone resource of the German cDNA consortium.</title>
        <authorList>
            <person name="Bechtel S."/>
            <person name="Rosenfelder H."/>
            <person name="Duda A."/>
            <person name="Schmidt C.P."/>
            <person name="Ernst U."/>
            <person name="Wellenreuther R."/>
            <person name="Mehrle A."/>
            <person name="Schuster C."/>
            <person name="Bahr A."/>
            <person name="Bloecker H."/>
            <person name="Heubner D."/>
            <person name="Hoerlein A."/>
            <person name="Michel G."/>
            <person name="Wedler H."/>
            <person name="Koehrer K."/>
            <person name="Ottenwaelder B."/>
            <person name="Poustka A."/>
            <person name="Wiemann S."/>
            <person name="Schupp I."/>
        </authorList>
    </citation>
    <scope>NUCLEOTIDE SEQUENCE [LARGE SCALE MRNA] (ISOFORM 2)</scope>
    <source>
        <tissue>Endometrial adenocarcinoma</tissue>
    </source>
</reference>
<reference key="3">
    <citation type="journal article" date="2006" name="Nature">
        <title>The DNA sequence and biological annotation of human chromosome 1.</title>
        <authorList>
            <person name="Gregory S.G."/>
            <person name="Barlow K.F."/>
            <person name="McLay K.E."/>
            <person name="Kaul R."/>
            <person name="Swarbreck D."/>
            <person name="Dunham A."/>
            <person name="Scott C.E."/>
            <person name="Howe K.L."/>
            <person name="Woodfine K."/>
            <person name="Spencer C.C.A."/>
            <person name="Jones M.C."/>
            <person name="Gillson C."/>
            <person name="Searle S."/>
            <person name="Zhou Y."/>
            <person name="Kokocinski F."/>
            <person name="McDonald L."/>
            <person name="Evans R."/>
            <person name="Phillips K."/>
            <person name="Atkinson A."/>
            <person name="Cooper R."/>
            <person name="Jones C."/>
            <person name="Hall R.E."/>
            <person name="Andrews T.D."/>
            <person name="Lloyd C."/>
            <person name="Ainscough R."/>
            <person name="Almeida J.P."/>
            <person name="Ambrose K.D."/>
            <person name="Anderson F."/>
            <person name="Andrew R.W."/>
            <person name="Ashwell R.I.S."/>
            <person name="Aubin K."/>
            <person name="Babbage A.K."/>
            <person name="Bagguley C.L."/>
            <person name="Bailey J."/>
            <person name="Beasley H."/>
            <person name="Bethel G."/>
            <person name="Bird C.P."/>
            <person name="Bray-Allen S."/>
            <person name="Brown J.Y."/>
            <person name="Brown A.J."/>
            <person name="Buckley D."/>
            <person name="Burton J."/>
            <person name="Bye J."/>
            <person name="Carder C."/>
            <person name="Chapman J.C."/>
            <person name="Clark S.Y."/>
            <person name="Clarke G."/>
            <person name="Clee C."/>
            <person name="Cobley V."/>
            <person name="Collier R.E."/>
            <person name="Corby N."/>
            <person name="Coville G.J."/>
            <person name="Davies J."/>
            <person name="Deadman R."/>
            <person name="Dunn M."/>
            <person name="Earthrowl M."/>
            <person name="Ellington A.G."/>
            <person name="Errington H."/>
            <person name="Frankish A."/>
            <person name="Frankland J."/>
            <person name="French L."/>
            <person name="Garner P."/>
            <person name="Garnett J."/>
            <person name="Gay L."/>
            <person name="Ghori M.R.J."/>
            <person name="Gibson R."/>
            <person name="Gilby L.M."/>
            <person name="Gillett W."/>
            <person name="Glithero R.J."/>
            <person name="Grafham D.V."/>
            <person name="Griffiths C."/>
            <person name="Griffiths-Jones S."/>
            <person name="Grocock R."/>
            <person name="Hammond S."/>
            <person name="Harrison E.S.I."/>
            <person name="Hart E."/>
            <person name="Haugen E."/>
            <person name="Heath P.D."/>
            <person name="Holmes S."/>
            <person name="Holt K."/>
            <person name="Howden P.J."/>
            <person name="Hunt A.R."/>
            <person name="Hunt S.E."/>
            <person name="Hunter G."/>
            <person name="Isherwood J."/>
            <person name="James R."/>
            <person name="Johnson C."/>
            <person name="Johnson D."/>
            <person name="Joy A."/>
            <person name="Kay M."/>
            <person name="Kershaw J.K."/>
            <person name="Kibukawa M."/>
            <person name="Kimberley A.M."/>
            <person name="King A."/>
            <person name="Knights A.J."/>
            <person name="Lad H."/>
            <person name="Laird G."/>
            <person name="Lawlor S."/>
            <person name="Leongamornlert D.A."/>
            <person name="Lloyd D.M."/>
            <person name="Loveland J."/>
            <person name="Lovell J."/>
            <person name="Lush M.J."/>
            <person name="Lyne R."/>
            <person name="Martin S."/>
            <person name="Mashreghi-Mohammadi M."/>
            <person name="Matthews L."/>
            <person name="Matthews N.S.W."/>
            <person name="McLaren S."/>
            <person name="Milne S."/>
            <person name="Mistry S."/>
            <person name="Moore M.J.F."/>
            <person name="Nickerson T."/>
            <person name="O'Dell C.N."/>
            <person name="Oliver K."/>
            <person name="Palmeiri A."/>
            <person name="Palmer S.A."/>
            <person name="Parker A."/>
            <person name="Patel D."/>
            <person name="Pearce A.V."/>
            <person name="Peck A.I."/>
            <person name="Pelan S."/>
            <person name="Phelps K."/>
            <person name="Phillimore B.J."/>
            <person name="Plumb R."/>
            <person name="Rajan J."/>
            <person name="Raymond C."/>
            <person name="Rouse G."/>
            <person name="Saenphimmachak C."/>
            <person name="Sehra H.K."/>
            <person name="Sheridan E."/>
            <person name="Shownkeen R."/>
            <person name="Sims S."/>
            <person name="Skuce C.D."/>
            <person name="Smith M."/>
            <person name="Steward C."/>
            <person name="Subramanian S."/>
            <person name="Sycamore N."/>
            <person name="Tracey A."/>
            <person name="Tromans A."/>
            <person name="Van Helmond Z."/>
            <person name="Wall M."/>
            <person name="Wallis J.M."/>
            <person name="White S."/>
            <person name="Whitehead S.L."/>
            <person name="Wilkinson J.E."/>
            <person name="Willey D.L."/>
            <person name="Williams H."/>
            <person name="Wilming L."/>
            <person name="Wray P.W."/>
            <person name="Wu Z."/>
            <person name="Coulson A."/>
            <person name="Vaudin M."/>
            <person name="Sulston J.E."/>
            <person name="Durbin R.M."/>
            <person name="Hubbard T."/>
            <person name="Wooster R."/>
            <person name="Dunham I."/>
            <person name="Carter N.P."/>
            <person name="McVean G."/>
            <person name="Ross M.T."/>
            <person name="Harrow J."/>
            <person name="Olson M.V."/>
            <person name="Beck S."/>
            <person name="Rogers J."/>
            <person name="Bentley D.R."/>
        </authorList>
    </citation>
    <scope>NUCLEOTIDE SEQUENCE [LARGE SCALE GENOMIC DNA]</scope>
</reference>
<reference key="4">
    <citation type="submission" date="2006-12" db="EMBL/GenBank/DDBJ databases">
        <authorList>
            <person name="Mural R.J."/>
            <person name="Istrail S."/>
            <person name="Sutton G.G."/>
            <person name="Florea L."/>
            <person name="Halpern A.L."/>
            <person name="Mobarry C.M."/>
            <person name="Lippert R."/>
            <person name="Walenz B."/>
            <person name="Shatkay H."/>
            <person name="Dew I."/>
            <person name="Miller J.R."/>
            <person name="Flanigan M.J."/>
            <person name="Edwards N.J."/>
            <person name="Bolanos R."/>
            <person name="Fasulo D."/>
            <person name="Halldorsson B.V."/>
            <person name="Hannenhalli S."/>
            <person name="Turner R."/>
            <person name="Yooseph S."/>
            <person name="Lu F."/>
            <person name="Nusskern D.R."/>
            <person name="Shue B.C."/>
            <person name="Zheng X.H."/>
            <person name="Zhong F."/>
            <person name="Delcher A.L."/>
            <person name="Huson D.H."/>
            <person name="Kravitz S.A."/>
            <person name="Mouchard L."/>
            <person name="Reinert K."/>
            <person name="Remington K.A."/>
            <person name="Clark A.G."/>
            <person name="Waterman M.S."/>
            <person name="Eichler E.E."/>
            <person name="Adams M.D."/>
            <person name="Hunkapiller M.W."/>
            <person name="Myers E.W."/>
            <person name="Venter J.C."/>
        </authorList>
    </citation>
    <scope>NUCLEOTIDE SEQUENCE [LARGE SCALE GENOMIC DNA]</scope>
</reference>
<reference key="5">
    <citation type="journal article" date="2004" name="Genome Res.">
        <title>The status, quality, and expansion of the NIH full-length cDNA project: the Mammalian Gene Collection (MGC).</title>
        <authorList>
            <consortium name="The MGC Project Team"/>
        </authorList>
    </citation>
    <scope>NUCLEOTIDE SEQUENCE [LARGE SCALE MRNA] (ISOFORM 1)</scope>
    <source>
        <tissue>Prostate</tissue>
    </source>
</reference>
<reference key="6">
    <citation type="journal article" date="2005" name="EMBO J.">
        <title>SIKE is an IKK epsilon/TBK1-associated suppressor of TLR3- and virus-triggered IRF-3 activation pathways.</title>
        <authorList>
            <person name="Huang J."/>
            <person name="Liu T."/>
            <person name="Xu L.-G."/>
            <person name="Chen D."/>
            <person name="Zhai Z."/>
            <person name="Shu H.-B."/>
        </authorList>
    </citation>
    <scope>FUNCTION</scope>
    <scope>SUBCELLULAR LOCATION</scope>
    <scope>TISSUE SPECIFICITY</scope>
    <scope>INTERACTION WITH IKBKE AND TBK1</scope>
</reference>
<reference key="7">
    <citation type="journal article" date="2015" name="Nat. Commun.">
        <title>CCM-3/STRIPAK promotes seamless tube extension through endocytic recycling.</title>
        <authorList>
            <person name="Lant B."/>
            <person name="Yu B."/>
            <person name="Goudreault M."/>
            <person name="Holmyard D."/>
            <person name="Knight J.D."/>
            <person name="Xu P."/>
            <person name="Zhao L."/>
            <person name="Chin K."/>
            <person name="Wallace E."/>
            <person name="Zhen M."/>
            <person name="Gingras A.C."/>
            <person name="Derry W.B."/>
        </authorList>
    </citation>
    <scope>INTERACTION WITH STRP1; STRN3 AND CDC42BPB</scope>
</reference>
<reference evidence="8 9 10" key="8">
    <citation type="journal article" date="2019" name="Cell Discov.">
        <title>Architecture, substructures, and dynamic assembly of STRIPAK complexes in Hippo signaling.</title>
        <authorList>
            <person name="Tang Y."/>
            <person name="Chen M."/>
            <person name="Zhou L."/>
            <person name="Ma J."/>
            <person name="Li Y."/>
            <person name="Zhang H."/>
            <person name="Shi Z."/>
            <person name="Xu Q."/>
            <person name="Zhang X."/>
            <person name="Gao Z."/>
            <person name="Zhao Y."/>
            <person name="Cheng Y."/>
            <person name="Jiao S."/>
            <person name="Zhou Z."/>
        </authorList>
    </citation>
    <scope>X-RAY CRYSTALLOGRAPHY (1.50 ANGSTROMS) OF 72-121 IN COMPLEX WITH SLMAP AND STRN3</scope>
    <scope>IDENTIFICATION IN THE STRIPAK COMPLEX</scope>
    <scope>FUNCTION</scope>
    <scope>MUTAGENESIS OF LEU-15; LEU-19; LEU-36; MET-43; LEU-90; LEU-94; GLU-96; HIS-97; LEU-101 AND ARG-109</scope>
</reference>
<organism>
    <name type="scientific">Homo sapiens</name>
    <name type="common">Human</name>
    <dbReference type="NCBI Taxonomy" id="9606"/>
    <lineage>
        <taxon>Eukaryota</taxon>
        <taxon>Metazoa</taxon>
        <taxon>Chordata</taxon>
        <taxon>Craniata</taxon>
        <taxon>Vertebrata</taxon>
        <taxon>Euteleostomi</taxon>
        <taxon>Mammalia</taxon>
        <taxon>Eutheria</taxon>
        <taxon>Euarchontoglires</taxon>
        <taxon>Primates</taxon>
        <taxon>Haplorrhini</taxon>
        <taxon>Catarrhini</taxon>
        <taxon>Hominidae</taxon>
        <taxon>Homo</taxon>
    </lineage>
</organism>
<dbReference type="EMBL" id="AK024821">
    <property type="protein sequence ID" value="BAB15020.1"/>
    <property type="molecule type" value="mRNA"/>
</dbReference>
<dbReference type="EMBL" id="CR749219">
    <property type="protein sequence ID" value="CAH18076.1"/>
    <property type="molecule type" value="mRNA"/>
</dbReference>
<dbReference type="EMBL" id="AL096773">
    <property type="status" value="NOT_ANNOTATED_CDS"/>
    <property type="molecule type" value="Genomic_DNA"/>
</dbReference>
<dbReference type="EMBL" id="CH471122">
    <property type="protein sequence ID" value="EAW56620.1"/>
    <property type="molecule type" value="Genomic_DNA"/>
</dbReference>
<dbReference type="EMBL" id="BC005934">
    <property type="protein sequence ID" value="AAH05934.1"/>
    <property type="molecule type" value="mRNA"/>
</dbReference>
<dbReference type="CCDS" id="CCDS41371.1">
    <molecule id="Q9BRV8-2"/>
</dbReference>
<dbReference type="CCDS" id="CCDS878.1">
    <molecule id="Q9BRV8-1"/>
</dbReference>
<dbReference type="RefSeq" id="NP_001095866.1">
    <molecule id="Q9BRV8-2"/>
    <property type="nucleotide sequence ID" value="NM_001102396.2"/>
</dbReference>
<dbReference type="RefSeq" id="NP_079349.2">
    <molecule id="Q9BRV8-1"/>
    <property type="nucleotide sequence ID" value="NM_025073.3"/>
</dbReference>
<dbReference type="PDB" id="6AKK">
    <property type="method" value="X-ray"/>
    <property type="resolution" value="1.50 A"/>
    <property type="chains" value="A/B=72-121"/>
</dbReference>
<dbReference type="PDB" id="6AKL">
    <property type="method" value="X-ray"/>
    <property type="resolution" value="1.75 A"/>
    <property type="chains" value="A/B=72-121"/>
</dbReference>
<dbReference type="PDB" id="6AKM">
    <property type="method" value="X-ray"/>
    <property type="resolution" value="2.30 A"/>
    <property type="chains" value="A=5-65"/>
</dbReference>
<dbReference type="PDBsum" id="6AKK"/>
<dbReference type="PDBsum" id="6AKL"/>
<dbReference type="PDBsum" id="6AKM"/>
<dbReference type="SMR" id="Q9BRV8"/>
<dbReference type="BioGRID" id="123136">
    <property type="interactions" value="65"/>
</dbReference>
<dbReference type="CORUM" id="Q9BRV8"/>
<dbReference type="FunCoup" id="Q9BRV8">
    <property type="interactions" value="2645"/>
</dbReference>
<dbReference type="IntAct" id="Q9BRV8">
    <property type="interactions" value="65"/>
</dbReference>
<dbReference type="STRING" id="9606.ENSP00000358541"/>
<dbReference type="GlyGen" id="Q9BRV8">
    <property type="glycosylation" value="1 site, 1 O-linked glycan (1 site)"/>
</dbReference>
<dbReference type="iPTMnet" id="Q9BRV8"/>
<dbReference type="PhosphoSitePlus" id="Q9BRV8"/>
<dbReference type="BioMuta" id="SIKE1"/>
<dbReference type="DMDM" id="74752290"/>
<dbReference type="jPOST" id="Q9BRV8"/>
<dbReference type="MassIVE" id="Q9BRV8"/>
<dbReference type="PaxDb" id="9606-ENSP00000358541"/>
<dbReference type="PeptideAtlas" id="Q9BRV8"/>
<dbReference type="ProteomicsDB" id="78843">
    <molecule id="Q9BRV8-1"/>
</dbReference>
<dbReference type="ProteomicsDB" id="78844">
    <molecule id="Q9BRV8-2"/>
</dbReference>
<dbReference type="Pumba" id="Q9BRV8"/>
<dbReference type="Antibodypedia" id="20165">
    <property type="antibodies" value="114 antibodies from 22 providers"/>
</dbReference>
<dbReference type="DNASU" id="80143"/>
<dbReference type="Ensembl" id="ENST00000060969.6">
    <molecule id="Q9BRV8-1"/>
    <property type="protein sequence ID" value="ENSP00000060969.6"/>
    <property type="gene ID" value="ENSG00000052723.12"/>
</dbReference>
<dbReference type="Ensembl" id="ENST00000369528.9">
    <molecule id="Q9BRV8-2"/>
    <property type="protein sequence ID" value="ENSP00000358541.5"/>
    <property type="gene ID" value="ENSG00000052723.12"/>
</dbReference>
<dbReference type="GeneID" id="80143"/>
<dbReference type="KEGG" id="hsa:80143"/>
<dbReference type="MANE-Select" id="ENST00000060969.6">
    <property type="protein sequence ID" value="ENSP00000060969.6"/>
    <property type="RefSeq nucleotide sequence ID" value="NM_025073.3"/>
    <property type="RefSeq protein sequence ID" value="NP_079349.2"/>
</dbReference>
<dbReference type="UCSC" id="uc001efo.5">
    <molecule id="Q9BRV8-1"/>
    <property type="organism name" value="human"/>
</dbReference>
<dbReference type="AGR" id="HGNC:26119"/>
<dbReference type="CTD" id="80143"/>
<dbReference type="DisGeNET" id="80143"/>
<dbReference type="GeneCards" id="SIKE1"/>
<dbReference type="HGNC" id="HGNC:26119">
    <property type="gene designation" value="SIKE1"/>
</dbReference>
<dbReference type="HPA" id="ENSG00000052723">
    <property type="expression patterns" value="Low tissue specificity"/>
</dbReference>
<dbReference type="MIM" id="611656">
    <property type="type" value="gene"/>
</dbReference>
<dbReference type="neXtProt" id="NX_Q9BRV8"/>
<dbReference type="OpenTargets" id="ENSG00000052723"/>
<dbReference type="PharmGKB" id="PA165752371"/>
<dbReference type="VEuPathDB" id="HostDB:ENSG00000052723"/>
<dbReference type="eggNOG" id="ENOG502QTKS">
    <property type="taxonomic scope" value="Eukaryota"/>
</dbReference>
<dbReference type="GeneTree" id="ENSGT00390000018003"/>
<dbReference type="HOGENOM" id="CLU_073167_1_0_1"/>
<dbReference type="InParanoid" id="Q9BRV8"/>
<dbReference type="OMA" id="MSKFKPH"/>
<dbReference type="OrthoDB" id="21214at2759"/>
<dbReference type="PAN-GO" id="Q9BRV8">
    <property type="GO annotations" value="0 GO annotations based on evolutionary models"/>
</dbReference>
<dbReference type="PhylomeDB" id="Q9BRV8"/>
<dbReference type="TreeFam" id="TF324337"/>
<dbReference type="PathwayCommons" id="Q9BRV8"/>
<dbReference type="Reactome" id="R-HSA-918233">
    <property type="pathway name" value="TRAF3-dependent IRF activation pathway"/>
</dbReference>
<dbReference type="Reactome" id="R-HSA-933541">
    <property type="pathway name" value="TRAF6 mediated IRF7 activation"/>
</dbReference>
<dbReference type="Reactome" id="R-HSA-9692916">
    <property type="pathway name" value="SARS-CoV-1 activates/modulates innate immune responses"/>
</dbReference>
<dbReference type="Reactome" id="R-HSA-9705671">
    <property type="pathway name" value="SARS-CoV-2 activates/modulates innate and adaptive immune responses"/>
</dbReference>
<dbReference type="SignaLink" id="Q9BRV8"/>
<dbReference type="SIGNOR" id="Q9BRV8"/>
<dbReference type="BioGRID-ORCS" id="80143">
    <property type="hits" value="15 hits in 1154 CRISPR screens"/>
</dbReference>
<dbReference type="ChiTaRS" id="SIKE1">
    <property type="organism name" value="human"/>
</dbReference>
<dbReference type="GenomeRNAi" id="80143"/>
<dbReference type="Pharos" id="Q9BRV8">
    <property type="development level" value="Tbio"/>
</dbReference>
<dbReference type="PRO" id="PR:Q9BRV8"/>
<dbReference type="Proteomes" id="UP000005640">
    <property type="component" value="Chromosome 1"/>
</dbReference>
<dbReference type="RNAct" id="Q9BRV8">
    <property type="molecule type" value="protein"/>
</dbReference>
<dbReference type="Bgee" id="ENSG00000052723">
    <property type="expression patterns" value="Expressed in buccal mucosa cell and 190 other cell types or tissues"/>
</dbReference>
<dbReference type="GO" id="GO:0005829">
    <property type="term" value="C:cytosol"/>
    <property type="evidence" value="ECO:0000304"/>
    <property type="project" value="Reactome"/>
</dbReference>
<dbReference type="GO" id="GO:0090443">
    <property type="term" value="C:FAR/SIN/STRIPAK complex"/>
    <property type="evidence" value="ECO:0000314"/>
    <property type="project" value="UniProtKB"/>
</dbReference>
<dbReference type="GO" id="GO:0019901">
    <property type="term" value="F:protein kinase binding"/>
    <property type="evidence" value="ECO:0000353"/>
    <property type="project" value="UniProtKB"/>
</dbReference>
<dbReference type="GO" id="GO:0030674">
    <property type="term" value="F:protein-macromolecule adaptor activity"/>
    <property type="evidence" value="ECO:0000314"/>
    <property type="project" value="UniProtKB"/>
</dbReference>
<dbReference type="GO" id="GO:0031267">
    <property type="term" value="F:small GTPase binding"/>
    <property type="evidence" value="ECO:0000353"/>
    <property type="project" value="UniProtKB"/>
</dbReference>
<dbReference type="GO" id="GO:0035331">
    <property type="term" value="P:negative regulation of hippo signaling"/>
    <property type="evidence" value="ECO:0000314"/>
    <property type="project" value="UniProtKB"/>
</dbReference>
<dbReference type="InterPro" id="IPR008555">
    <property type="entry name" value="SIKE"/>
</dbReference>
<dbReference type="PANTHER" id="PTHR12186">
    <property type="entry name" value="SIKE FAMILY MEMBER"/>
    <property type="match status" value="1"/>
</dbReference>
<dbReference type="PANTHER" id="PTHR12186:SF4">
    <property type="entry name" value="SUPPRESSOR OF IKBKE 1"/>
    <property type="match status" value="1"/>
</dbReference>
<dbReference type="Pfam" id="PF05769">
    <property type="entry name" value="SIKE"/>
    <property type="match status" value="1"/>
</dbReference>
<dbReference type="SUPFAM" id="SSF46966">
    <property type="entry name" value="Spectrin repeat"/>
    <property type="match status" value="1"/>
</dbReference>
<sequence>MSCTIEKILTDAKTLLERLREHDAAAESLVDQSAALHRRVAAMREAGTALPDQYQEDASDMKDMSKYKPHILLSQENTQIRDLQQENRELWISLEEHQDALELIMSKYRKQMLQLMVAKKAVDAEPVLKAHQSHSAEIESQIDRICEMGEVMRKAVQVDDDQFCKIQEKLAQLELENKELRELLSISSESLQARKENSMDTASQAIK</sequence>
<evidence type="ECO:0000255" key="1"/>
<evidence type="ECO:0000269" key="2">
    <source>
    </source>
</evidence>
<evidence type="ECO:0000269" key="3">
    <source>
    </source>
</evidence>
<evidence type="ECO:0000269" key="4">
    <source>
    </source>
</evidence>
<evidence type="ECO:0000303" key="5">
    <source>
    </source>
</evidence>
<evidence type="ECO:0000305" key="6"/>
<evidence type="ECO:0000312" key="7">
    <source>
        <dbReference type="HGNC" id="HGNC:26119"/>
    </source>
</evidence>
<evidence type="ECO:0007744" key="8">
    <source>
        <dbReference type="PDB" id="6AKK"/>
    </source>
</evidence>
<evidence type="ECO:0007744" key="9">
    <source>
        <dbReference type="PDB" id="6AKL"/>
    </source>
</evidence>
<evidence type="ECO:0007744" key="10">
    <source>
        <dbReference type="PDB" id="6AKM"/>
    </source>
</evidence>
<evidence type="ECO:0007829" key="11">
    <source>
        <dbReference type="PDB" id="6AKK"/>
    </source>
</evidence>
<evidence type="ECO:0007829" key="12">
    <source>
        <dbReference type="PDB" id="6AKM"/>
    </source>
</evidence>
<keyword id="KW-0002">3D-structure</keyword>
<keyword id="KW-0025">Alternative splicing</keyword>
<keyword id="KW-0175">Coiled coil</keyword>
<keyword id="KW-0963">Cytoplasm</keyword>
<keyword id="KW-1267">Proteomics identification</keyword>
<keyword id="KW-1185">Reference proteome</keyword>
<protein>
    <recommendedName>
        <fullName evidence="6">Suppressor of IKBKE 1</fullName>
    </recommendedName>
    <alternativeName>
        <fullName>Suppressor of IKK-epsilon</fullName>
    </alternativeName>
</protein>
<comment type="function">
    <text evidence="2 4">Physiological suppressor of IKK-epsilon and TBK1 that plays an inhibitory role in virus- and TLR3-triggered IRF3. Inhibits TLR3-mediated activation of interferon-stimulated response elements (ISRE) and the IFN-beta promoter. May act by disrupting the interactions of IKBKE or TBK1 with TICAM1/TRIF, IRF3 and RIGI. Does not inhibit NF-kappa-B activation pathways (PubMed:16281057). Associates with the striatin-interacting phosphatase and kinase (STRIPAK) core complex, forming the extended (SIKE1:SLMAP)STRIPAK complex (PubMed:30622739). The (SIKE1:SLMAP)STRIPAK complex dephosphorylates STK3 leading to the inhibition of Hippo signaling and the control of cell growth (PubMed:30622739).</text>
</comment>
<comment type="subunit">
    <text evidence="2 3 4">Interacts with IKBKE and TBK1 via its coiled coil region. Interaction with TBK1 is disrupted upon viral infection or TLR3 stimulation (PubMed:16281057). Interacts with CDC42BPB (PubMed:25743393). Interacts with SIKE1 which mediates association with the STRIPAK core complex composed of PP2A catalytic and scaffolding subunits, the striatins (PP2A regulatory subunits), the striatin-associated proteins MOB4, STRIP1 and STRIP2, PDCD10 and members of the STE20 kinases, such as STK24 and STK26 (PubMed:30622739).</text>
</comment>
<comment type="interaction">
    <interactant intactId="EBI-1773646">
        <id>Q9BRV8</id>
    </interactant>
    <interactant intactId="EBI-11954144">
        <id>O43439-4</id>
        <label>CBFA2T2</label>
    </interactant>
    <organismsDiffer>false</organismsDiffer>
    <experiments>3</experiments>
</comment>
<comment type="interaction">
    <interactant intactId="EBI-1773646">
        <id>Q9BRV8</id>
    </interactant>
    <interactant intactId="EBI-2350265">
        <id>Q7L2Z9</id>
        <label>CENPQ</label>
    </interactant>
    <organismsDiffer>false</organismsDiffer>
    <experiments>3</experiments>
</comment>
<comment type="interaction">
    <interactant intactId="EBI-1773646">
        <id>Q9BRV8</id>
    </interactant>
    <interactant intactId="EBI-1188472">
        <id>P78358</id>
        <label>CTAG1B</label>
    </interactant>
    <organismsDiffer>false</organismsDiffer>
    <experiments>3</experiments>
</comment>
<comment type="interaction">
    <interactant intactId="EBI-1773646">
        <id>Q9BRV8</id>
    </interactant>
    <interactant intactId="EBI-741158">
        <id>Q96HA8</id>
        <label>NTAQ1</label>
    </interactant>
    <organismsDiffer>false</organismsDiffer>
    <experiments>3</experiments>
</comment>
<comment type="interaction">
    <interactant intactId="EBI-1773646">
        <id>Q9BRV8</id>
    </interactant>
    <interactant intactId="EBI-10692913">
        <id>Q9UIL1-3</id>
        <label>SCOC</label>
    </interactant>
    <organismsDiffer>false</organismsDiffer>
    <experiments>3</experiments>
</comment>
<comment type="interaction">
    <interactant intactId="EBI-1773646">
        <id>Q9BRV8</id>
    </interactant>
    <interactant intactId="EBI-1053876">
        <id>Q13033-2</id>
        <label>STRN3</label>
    </interactant>
    <organismsDiffer>false</organismsDiffer>
    <experiments>4</experiments>
</comment>
<comment type="interaction">
    <interactant intactId="EBI-1773646">
        <id>Q9BRV8</id>
    </interactant>
    <interactant intactId="EBI-714135">
        <id>O75558</id>
        <label>STX11</label>
    </interactant>
    <organismsDiffer>false</organismsDiffer>
    <experiments>4</experiments>
</comment>
<comment type="interaction">
    <interactant intactId="EBI-1773646">
        <id>Q9BRV8</id>
    </interactant>
    <interactant intactId="EBI-765817">
        <id>Q9Y228</id>
        <label>TRAF3IP3</label>
    </interactant>
    <organismsDiffer>false</organismsDiffer>
    <experiments>4</experiments>
</comment>
<comment type="interaction">
    <interactant intactId="EBI-1773646">
        <id>Q9BRV8</id>
    </interactant>
    <interactant intactId="EBI-359793">
        <id>P40222</id>
        <label>TXLNA</label>
    </interactant>
    <organismsDiffer>false</organismsDiffer>
    <experiments>3</experiments>
</comment>
<comment type="interaction">
    <interactant intactId="EBI-1773646">
        <id>Q9BRV8</id>
    </interactant>
    <interactant intactId="EBI-6116822">
        <id>Q8N3L3</id>
        <label>TXLNB</label>
    </interactant>
    <organismsDiffer>false</organismsDiffer>
    <experiments>3</experiments>
</comment>
<comment type="interaction">
    <interactant intactId="EBI-1773646">
        <id>Q9BRV8</id>
    </interactant>
    <interactant intactId="EBI-14104088">
        <id>Q53FD0-2</id>
        <label>ZC2HC1C</label>
    </interactant>
    <organismsDiffer>false</organismsDiffer>
    <experiments>6</experiments>
</comment>
<comment type="subcellular location">
    <subcellularLocation>
        <location evidence="2">Cytoplasm</location>
    </subcellularLocation>
</comment>
<comment type="alternative products">
    <event type="alternative splicing"/>
    <isoform>
        <id>Q9BRV8-1</id>
        <name>1</name>
        <sequence type="displayed"/>
    </isoform>
    <isoform>
        <id>Q9BRV8-2</id>
        <name>2</name>
        <sequence type="described" ref="VSP_027543"/>
    </isoform>
</comment>
<comment type="tissue specificity">
    <text evidence="2">Widely expressed. Expressed in brain, heart, skeletal muscle, colon, thymus, spleen, kidney, liver, small intestine, placenta, lung and leukocytes. Present in all cell lines tested (at protein level).</text>
</comment>
<comment type="similarity">
    <text evidence="6">Belongs to the SIKE family.</text>
</comment>
<feature type="chain" id="PRO_0000299050" description="Suppressor of IKBKE 1">
    <location>
        <begin position="1"/>
        <end position="207"/>
    </location>
</feature>
<feature type="coiled-coil region" evidence="1">
    <location>
        <begin position="70"/>
        <end position="102"/>
    </location>
</feature>
<feature type="coiled-coil region" evidence="1">
    <location>
        <begin position="162"/>
        <end position="193"/>
    </location>
</feature>
<feature type="splice variant" id="VSP_027543" description="In isoform 2." evidence="5">
    <original>Q</original>
    <variation>QVRQR</variation>
    <location>
        <position position="53"/>
    </location>
</feature>
<feature type="mutagenesis site" description="Loss of interaction with SLMAP." evidence="4">
    <original>L</original>
    <variation>D</variation>
    <location>
        <position position="15"/>
    </location>
</feature>
<feature type="mutagenesis site" description="Loss of interaction with SLMAP." evidence="4">
    <original>L</original>
    <variation>D</variation>
    <location>
        <position position="19"/>
    </location>
</feature>
<feature type="mutagenesis site" description="Loss of interaction with SLMAP." evidence="4">
    <original>L</original>
    <variation>D</variation>
    <location>
        <position position="36"/>
    </location>
</feature>
<feature type="mutagenesis site" description="No effect on interaction with SLMAP." evidence="4">
    <original>M</original>
    <variation>E</variation>
    <location>
        <position position="43"/>
    </location>
</feature>
<feature type="mutagenesis site" description="Loss of (SIKE1:SLMAP)STRIPAK complex formation." evidence="4">
    <original>L</original>
    <variation>D</variation>
    <location>
        <position position="90"/>
    </location>
</feature>
<feature type="mutagenesis site" description="Loss of (SIKE1:SLMAP)STRIPAK complex formation." evidence="4">
    <original>L</original>
    <variation>D</variation>
    <location>
        <position position="94"/>
    </location>
</feature>
<feature type="mutagenesis site" description="Loss of (SIKE1:SLMAP)STRIPAK complex formation; when assocated with A-109." evidence="4">
    <original>E</original>
    <variation>A</variation>
    <location>
        <position position="96"/>
    </location>
</feature>
<feature type="mutagenesis site" description="Loss of (SIKE1:SLMAP)STRIPAK complex formation." evidence="4">
    <original>H</original>
    <variation>D</variation>
    <location>
        <position position="97"/>
    </location>
</feature>
<feature type="mutagenesis site" description="Loss of (SIKE1:SLMAP)STRIPAK complex formation." evidence="4">
    <original>L</original>
    <variation>D</variation>
    <location>
        <position position="101"/>
    </location>
</feature>
<feature type="mutagenesis site" description="Loss of (SIKE1:SLMAP)STRIPAK complex formation; when assocated with A-109." evidence="4">
    <original>R</original>
    <variation>A</variation>
    <location>
        <position position="109"/>
    </location>
</feature>
<feature type="sequence conflict" description="In Ref. 2; CAH18076." evidence="6" ref="2">
    <original>V</original>
    <variation>I</variation>
    <location>
        <position position="127"/>
    </location>
</feature>
<feature type="sequence conflict" description="In Ref. 1; BAB15020." evidence="6" ref="1">
    <original>K</original>
    <variation>I</variation>
    <location>
        <position position="169"/>
    </location>
</feature>
<feature type="sequence conflict" description="In Ref. 1; BAB15020." evidence="6" ref="1">
    <original>L</original>
    <variation>H</variation>
    <location>
        <position position="191"/>
    </location>
</feature>
<feature type="helix" evidence="12">
    <location>
        <begin position="5"/>
        <end position="46"/>
    </location>
</feature>
<feature type="helix" evidence="11">
    <location>
        <begin position="75"/>
        <end position="118"/>
    </location>
</feature>